<accession>Q96GJ1</accession>
<accession>A6NDG5</accession>
<accession>A6NEI9</accession>
<accession>A6NMG6</accession>
<accession>Q5JPF0</accession>
<accession>Q5JVY6</accession>
<accession>Q96HU7</accession>
<accession>Q96IH9</accession>
<accession>Q9H9K2</accession>
<name>TRM2B_HUMAN</name>
<gene>
    <name evidence="9 11" type="primary">TRMT2B</name>
    <name evidence="11" type="synonym">CXorf34</name>
</gene>
<comment type="function">
    <text evidence="5 6">Mitochondrial S-adenosyl-L-methionine-dependent methyltransferase that catalyzes the formation of 5-methyl-uridine in tRNAs and 12S rRNA (PubMed:31948311, PubMed:34556860). Catalyzes the methylation of uridine at position 54 (m5U54) in all tRNAs (PubMed:31948311). Specifically methylates the uridine in position 429 of 12S rRNA (m5U429) (PubMed:31948311). Does not affect RNA stability or mitochondrial translation (PubMed:31948311).</text>
</comment>
<comment type="catalytic activity">
    <reaction evidence="5">
        <text>uridine(54) in tRNA + S-adenosyl-L-methionine = 5-methyluridine(54) in tRNA + S-adenosyl-L-homocysteine + H(+)</text>
        <dbReference type="Rhea" id="RHEA:42712"/>
        <dbReference type="Rhea" id="RHEA-COMP:10167"/>
        <dbReference type="Rhea" id="RHEA-COMP:10193"/>
        <dbReference type="ChEBI" id="CHEBI:15378"/>
        <dbReference type="ChEBI" id="CHEBI:57856"/>
        <dbReference type="ChEBI" id="CHEBI:59789"/>
        <dbReference type="ChEBI" id="CHEBI:65315"/>
        <dbReference type="ChEBI" id="CHEBI:74447"/>
        <dbReference type="EC" id="2.1.1.35"/>
    </reaction>
    <physiologicalReaction direction="left-to-right" evidence="5">
        <dbReference type="Rhea" id="RHEA:42713"/>
    </physiologicalReaction>
</comment>
<comment type="catalytic activity">
    <reaction evidence="5">
        <text>a uridine in 12S rRNA + S-adenosyl-L-methionine = a 5-methyluridine in 12S rRNA + S-adenosyl-L-homocysteine + H(+)</text>
        <dbReference type="Rhea" id="RHEA:69859"/>
        <dbReference type="Rhea" id="RHEA-COMP:17791"/>
        <dbReference type="Rhea" id="RHEA-COMP:17792"/>
        <dbReference type="ChEBI" id="CHEBI:15378"/>
        <dbReference type="ChEBI" id="CHEBI:57856"/>
        <dbReference type="ChEBI" id="CHEBI:59789"/>
        <dbReference type="ChEBI" id="CHEBI:65315"/>
        <dbReference type="ChEBI" id="CHEBI:74447"/>
    </reaction>
    <physiologicalReaction direction="left-to-right" evidence="5">
        <dbReference type="Rhea" id="RHEA:69860"/>
    </physiologicalReaction>
</comment>
<comment type="interaction">
    <interactant intactId="EBI-10195625">
        <id>Q96GJ1</id>
    </interactant>
    <interactant intactId="EBI-750962">
        <id>P07992</id>
        <label>ERCC1</label>
    </interactant>
    <organismsDiffer>false</organismsDiffer>
    <experiments>3</experiments>
</comment>
<comment type="subcellular location">
    <subcellularLocation>
        <location evidence="5">Mitochondrion</location>
    </subcellularLocation>
</comment>
<comment type="subcellular location">
    <molecule>Isoform 1</molecule>
    <subcellularLocation>
        <location evidence="4">Mitochondrion matrix</location>
    </subcellularLocation>
</comment>
<comment type="alternative products">
    <event type="alternative splicing"/>
    <isoform>
        <id>Q96GJ1-1</id>
        <name>1</name>
        <sequence type="displayed"/>
    </isoform>
    <isoform>
        <id>Q96GJ1-2</id>
        <name>2</name>
        <sequence type="described" ref="VSP_029644"/>
    </isoform>
    <isoform>
        <id>Q96GJ1-3</id>
        <name>3</name>
        <sequence type="described" ref="VSP_029643"/>
    </isoform>
</comment>
<comment type="similarity">
    <text evidence="3">Belongs to the class I-like SAM-binding methyltransferase superfamily. RNA M5U methyltransferase family.</text>
</comment>
<reference key="1">
    <citation type="journal article" date="2004" name="Nat. Genet.">
        <title>Complete sequencing and characterization of 21,243 full-length human cDNAs.</title>
        <authorList>
            <person name="Ota T."/>
            <person name="Suzuki Y."/>
            <person name="Nishikawa T."/>
            <person name="Otsuki T."/>
            <person name="Sugiyama T."/>
            <person name="Irie R."/>
            <person name="Wakamatsu A."/>
            <person name="Hayashi K."/>
            <person name="Sato H."/>
            <person name="Nagai K."/>
            <person name="Kimura K."/>
            <person name="Makita H."/>
            <person name="Sekine M."/>
            <person name="Obayashi M."/>
            <person name="Nishi T."/>
            <person name="Shibahara T."/>
            <person name="Tanaka T."/>
            <person name="Ishii S."/>
            <person name="Yamamoto J."/>
            <person name="Saito K."/>
            <person name="Kawai Y."/>
            <person name="Isono Y."/>
            <person name="Nakamura Y."/>
            <person name="Nagahari K."/>
            <person name="Murakami K."/>
            <person name="Yasuda T."/>
            <person name="Iwayanagi T."/>
            <person name="Wagatsuma M."/>
            <person name="Shiratori A."/>
            <person name="Sudo H."/>
            <person name="Hosoiri T."/>
            <person name="Kaku Y."/>
            <person name="Kodaira H."/>
            <person name="Kondo H."/>
            <person name="Sugawara M."/>
            <person name="Takahashi M."/>
            <person name="Kanda K."/>
            <person name="Yokoi T."/>
            <person name="Furuya T."/>
            <person name="Kikkawa E."/>
            <person name="Omura Y."/>
            <person name="Abe K."/>
            <person name="Kamihara K."/>
            <person name="Katsuta N."/>
            <person name="Sato K."/>
            <person name="Tanikawa M."/>
            <person name="Yamazaki M."/>
            <person name="Ninomiya K."/>
            <person name="Ishibashi T."/>
            <person name="Yamashita H."/>
            <person name="Murakawa K."/>
            <person name="Fujimori K."/>
            <person name="Tanai H."/>
            <person name="Kimata M."/>
            <person name="Watanabe M."/>
            <person name="Hiraoka S."/>
            <person name="Chiba Y."/>
            <person name="Ishida S."/>
            <person name="Ono Y."/>
            <person name="Takiguchi S."/>
            <person name="Watanabe S."/>
            <person name="Yosida M."/>
            <person name="Hotuta T."/>
            <person name="Kusano J."/>
            <person name="Kanehori K."/>
            <person name="Takahashi-Fujii A."/>
            <person name="Hara H."/>
            <person name="Tanase T.-O."/>
            <person name="Nomura Y."/>
            <person name="Togiya S."/>
            <person name="Komai F."/>
            <person name="Hara R."/>
            <person name="Takeuchi K."/>
            <person name="Arita M."/>
            <person name="Imose N."/>
            <person name="Musashino K."/>
            <person name="Yuuki H."/>
            <person name="Oshima A."/>
            <person name="Sasaki N."/>
            <person name="Aotsuka S."/>
            <person name="Yoshikawa Y."/>
            <person name="Matsunawa H."/>
            <person name="Ichihara T."/>
            <person name="Shiohata N."/>
            <person name="Sano S."/>
            <person name="Moriya S."/>
            <person name="Momiyama H."/>
            <person name="Satoh N."/>
            <person name="Takami S."/>
            <person name="Terashima Y."/>
            <person name="Suzuki O."/>
            <person name="Nakagawa S."/>
            <person name="Senoh A."/>
            <person name="Mizoguchi H."/>
            <person name="Goto Y."/>
            <person name="Shimizu F."/>
            <person name="Wakebe H."/>
            <person name="Hishigaki H."/>
            <person name="Watanabe T."/>
            <person name="Sugiyama A."/>
            <person name="Takemoto M."/>
            <person name="Kawakami B."/>
            <person name="Yamazaki M."/>
            <person name="Watanabe K."/>
            <person name="Kumagai A."/>
            <person name="Itakura S."/>
            <person name="Fukuzumi Y."/>
            <person name="Fujimori Y."/>
            <person name="Komiyama M."/>
            <person name="Tashiro H."/>
            <person name="Tanigami A."/>
            <person name="Fujiwara T."/>
            <person name="Ono T."/>
            <person name="Yamada K."/>
            <person name="Fujii Y."/>
            <person name="Ozaki K."/>
            <person name="Hirao M."/>
            <person name="Ohmori Y."/>
            <person name="Kawabata A."/>
            <person name="Hikiji T."/>
            <person name="Kobatake N."/>
            <person name="Inagaki H."/>
            <person name="Ikema Y."/>
            <person name="Okamoto S."/>
            <person name="Okitani R."/>
            <person name="Kawakami T."/>
            <person name="Noguchi S."/>
            <person name="Itoh T."/>
            <person name="Shigeta K."/>
            <person name="Senba T."/>
            <person name="Matsumura K."/>
            <person name="Nakajima Y."/>
            <person name="Mizuno T."/>
            <person name="Morinaga M."/>
            <person name="Sasaki M."/>
            <person name="Togashi T."/>
            <person name="Oyama M."/>
            <person name="Hata H."/>
            <person name="Watanabe M."/>
            <person name="Komatsu T."/>
            <person name="Mizushima-Sugano J."/>
            <person name="Satoh T."/>
            <person name="Shirai Y."/>
            <person name="Takahashi Y."/>
            <person name="Nakagawa K."/>
            <person name="Okumura K."/>
            <person name="Nagase T."/>
            <person name="Nomura N."/>
            <person name="Kikuchi H."/>
            <person name="Masuho Y."/>
            <person name="Yamashita R."/>
            <person name="Nakai K."/>
            <person name="Yada T."/>
            <person name="Nakamura Y."/>
            <person name="Ohara O."/>
            <person name="Isogai T."/>
            <person name="Sugano S."/>
        </authorList>
    </citation>
    <scope>NUCLEOTIDE SEQUENCE [LARGE SCALE MRNA] (ISOFORM 1)</scope>
    <source>
        <tissue>Teratocarcinoma</tissue>
    </source>
</reference>
<reference key="2">
    <citation type="journal article" date="2007" name="BMC Genomics">
        <title>The full-ORF clone resource of the German cDNA consortium.</title>
        <authorList>
            <person name="Bechtel S."/>
            <person name="Rosenfelder H."/>
            <person name="Duda A."/>
            <person name="Schmidt C.P."/>
            <person name="Ernst U."/>
            <person name="Wellenreuther R."/>
            <person name="Mehrle A."/>
            <person name="Schuster C."/>
            <person name="Bahr A."/>
            <person name="Bloecker H."/>
            <person name="Heubner D."/>
            <person name="Hoerlein A."/>
            <person name="Michel G."/>
            <person name="Wedler H."/>
            <person name="Koehrer K."/>
            <person name="Ottenwaelder B."/>
            <person name="Poustka A."/>
            <person name="Wiemann S."/>
            <person name="Schupp I."/>
        </authorList>
    </citation>
    <scope>NUCLEOTIDE SEQUENCE [LARGE SCALE MRNA] (ISOFORM 3)</scope>
    <source>
        <tissue>Lymph node</tissue>
    </source>
</reference>
<reference key="3">
    <citation type="journal article" date="2005" name="Nature">
        <title>The DNA sequence of the human X chromosome.</title>
        <authorList>
            <person name="Ross M.T."/>
            <person name="Grafham D.V."/>
            <person name="Coffey A.J."/>
            <person name="Scherer S."/>
            <person name="McLay K."/>
            <person name="Muzny D."/>
            <person name="Platzer M."/>
            <person name="Howell G.R."/>
            <person name="Burrows C."/>
            <person name="Bird C.P."/>
            <person name="Frankish A."/>
            <person name="Lovell F.L."/>
            <person name="Howe K.L."/>
            <person name="Ashurst J.L."/>
            <person name="Fulton R.S."/>
            <person name="Sudbrak R."/>
            <person name="Wen G."/>
            <person name="Jones M.C."/>
            <person name="Hurles M.E."/>
            <person name="Andrews T.D."/>
            <person name="Scott C.E."/>
            <person name="Searle S."/>
            <person name="Ramser J."/>
            <person name="Whittaker A."/>
            <person name="Deadman R."/>
            <person name="Carter N.P."/>
            <person name="Hunt S.E."/>
            <person name="Chen R."/>
            <person name="Cree A."/>
            <person name="Gunaratne P."/>
            <person name="Havlak P."/>
            <person name="Hodgson A."/>
            <person name="Metzker M.L."/>
            <person name="Richards S."/>
            <person name="Scott G."/>
            <person name="Steffen D."/>
            <person name="Sodergren E."/>
            <person name="Wheeler D.A."/>
            <person name="Worley K.C."/>
            <person name="Ainscough R."/>
            <person name="Ambrose K.D."/>
            <person name="Ansari-Lari M.A."/>
            <person name="Aradhya S."/>
            <person name="Ashwell R.I."/>
            <person name="Babbage A.K."/>
            <person name="Bagguley C.L."/>
            <person name="Ballabio A."/>
            <person name="Banerjee R."/>
            <person name="Barker G.E."/>
            <person name="Barlow K.F."/>
            <person name="Barrett I.P."/>
            <person name="Bates K.N."/>
            <person name="Beare D.M."/>
            <person name="Beasley H."/>
            <person name="Beasley O."/>
            <person name="Beck A."/>
            <person name="Bethel G."/>
            <person name="Blechschmidt K."/>
            <person name="Brady N."/>
            <person name="Bray-Allen S."/>
            <person name="Bridgeman A.M."/>
            <person name="Brown A.J."/>
            <person name="Brown M.J."/>
            <person name="Bonnin D."/>
            <person name="Bruford E.A."/>
            <person name="Buhay C."/>
            <person name="Burch P."/>
            <person name="Burford D."/>
            <person name="Burgess J."/>
            <person name="Burrill W."/>
            <person name="Burton J."/>
            <person name="Bye J.M."/>
            <person name="Carder C."/>
            <person name="Carrel L."/>
            <person name="Chako J."/>
            <person name="Chapman J.C."/>
            <person name="Chavez D."/>
            <person name="Chen E."/>
            <person name="Chen G."/>
            <person name="Chen Y."/>
            <person name="Chen Z."/>
            <person name="Chinault C."/>
            <person name="Ciccodicola A."/>
            <person name="Clark S.Y."/>
            <person name="Clarke G."/>
            <person name="Clee C.M."/>
            <person name="Clegg S."/>
            <person name="Clerc-Blankenburg K."/>
            <person name="Clifford K."/>
            <person name="Cobley V."/>
            <person name="Cole C.G."/>
            <person name="Conquer J.S."/>
            <person name="Corby N."/>
            <person name="Connor R.E."/>
            <person name="David R."/>
            <person name="Davies J."/>
            <person name="Davis C."/>
            <person name="Davis J."/>
            <person name="Delgado O."/>
            <person name="Deshazo D."/>
            <person name="Dhami P."/>
            <person name="Ding Y."/>
            <person name="Dinh H."/>
            <person name="Dodsworth S."/>
            <person name="Draper H."/>
            <person name="Dugan-Rocha S."/>
            <person name="Dunham A."/>
            <person name="Dunn M."/>
            <person name="Durbin K.J."/>
            <person name="Dutta I."/>
            <person name="Eades T."/>
            <person name="Ellwood M."/>
            <person name="Emery-Cohen A."/>
            <person name="Errington H."/>
            <person name="Evans K.L."/>
            <person name="Faulkner L."/>
            <person name="Francis F."/>
            <person name="Frankland J."/>
            <person name="Fraser A.E."/>
            <person name="Galgoczy P."/>
            <person name="Gilbert J."/>
            <person name="Gill R."/>
            <person name="Gloeckner G."/>
            <person name="Gregory S.G."/>
            <person name="Gribble S."/>
            <person name="Griffiths C."/>
            <person name="Grocock R."/>
            <person name="Gu Y."/>
            <person name="Gwilliam R."/>
            <person name="Hamilton C."/>
            <person name="Hart E.A."/>
            <person name="Hawes A."/>
            <person name="Heath P.D."/>
            <person name="Heitmann K."/>
            <person name="Hennig S."/>
            <person name="Hernandez J."/>
            <person name="Hinzmann B."/>
            <person name="Ho S."/>
            <person name="Hoffs M."/>
            <person name="Howden P.J."/>
            <person name="Huckle E.J."/>
            <person name="Hume J."/>
            <person name="Hunt P.J."/>
            <person name="Hunt A.R."/>
            <person name="Isherwood J."/>
            <person name="Jacob L."/>
            <person name="Johnson D."/>
            <person name="Jones S."/>
            <person name="de Jong P.J."/>
            <person name="Joseph S.S."/>
            <person name="Keenan S."/>
            <person name="Kelly S."/>
            <person name="Kershaw J.K."/>
            <person name="Khan Z."/>
            <person name="Kioschis P."/>
            <person name="Klages S."/>
            <person name="Knights A.J."/>
            <person name="Kosiura A."/>
            <person name="Kovar-Smith C."/>
            <person name="Laird G.K."/>
            <person name="Langford C."/>
            <person name="Lawlor S."/>
            <person name="Leversha M."/>
            <person name="Lewis L."/>
            <person name="Liu W."/>
            <person name="Lloyd C."/>
            <person name="Lloyd D.M."/>
            <person name="Loulseged H."/>
            <person name="Loveland J.E."/>
            <person name="Lovell J.D."/>
            <person name="Lozado R."/>
            <person name="Lu J."/>
            <person name="Lyne R."/>
            <person name="Ma J."/>
            <person name="Maheshwari M."/>
            <person name="Matthews L.H."/>
            <person name="McDowall J."/>
            <person name="McLaren S."/>
            <person name="McMurray A."/>
            <person name="Meidl P."/>
            <person name="Meitinger T."/>
            <person name="Milne S."/>
            <person name="Miner G."/>
            <person name="Mistry S.L."/>
            <person name="Morgan M."/>
            <person name="Morris S."/>
            <person name="Mueller I."/>
            <person name="Mullikin J.C."/>
            <person name="Nguyen N."/>
            <person name="Nordsiek G."/>
            <person name="Nyakatura G."/>
            <person name="O'dell C.N."/>
            <person name="Okwuonu G."/>
            <person name="Palmer S."/>
            <person name="Pandian R."/>
            <person name="Parker D."/>
            <person name="Parrish J."/>
            <person name="Pasternak S."/>
            <person name="Patel D."/>
            <person name="Pearce A.V."/>
            <person name="Pearson D.M."/>
            <person name="Pelan S.E."/>
            <person name="Perez L."/>
            <person name="Porter K.M."/>
            <person name="Ramsey Y."/>
            <person name="Reichwald K."/>
            <person name="Rhodes S."/>
            <person name="Ridler K.A."/>
            <person name="Schlessinger D."/>
            <person name="Schueler M.G."/>
            <person name="Sehra H.K."/>
            <person name="Shaw-Smith C."/>
            <person name="Shen H."/>
            <person name="Sheridan E.M."/>
            <person name="Shownkeen R."/>
            <person name="Skuce C.D."/>
            <person name="Smith M.L."/>
            <person name="Sotheran E.C."/>
            <person name="Steingruber H.E."/>
            <person name="Steward C.A."/>
            <person name="Storey R."/>
            <person name="Swann R.M."/>
            <person name="Swarbreck D."/>
            <person name="Tabor P.E."/>
            <person name="Taudien S."/>
            <person name="Taylor T."/>
            <person name="Teague B."/>
            <person name="Thomas K."/>
            <person name="Thorpe A."/>
            <person name="Timms K."/>
            <person name="Tracey A."/>
            <person name="Trevanion S."/>
            <person name="Tromans A.C."/>
            <person name="d'Urso M."/>
            <person name="Verduzco D."/>
            <person name="Villasana D."/>
            <person name="Waldron L."/>
            <person name="Wall M."/>
            <person name="Wang Q."/>
            <person name="Warren J."/>
            <person name="Warry G.L."/>
            <person name="Wei X."/>
            <person name="West A."/>
            <person name="Whitehead S.L."/>
            <person name="Whiteley M.N."/>
            <person name="Wilkinson J.E."/>
            <person name="Willey D.L."/>
            <person name="Williams G."/>
            <person name="Williams L."/>
            <person name="Williamson A."/>
            <person name="Williamson H."/>
            <person name="Wilming L."/>
            <person name="Woodmansey R.L."/>
            <person name="Wray P.W."/>
            <person name="Yen J."/>
            <person name="Zhang J."/>
            <person name="Zhou J."/>
            <person name="Zoghbi H."/>
            <person name="Zorilla S."/>
            <person name="Buck D."/>
            <person name="Reinhardt R."/>
            <person name="Poustka A."/>
            <person name="Rosenthal A."/>
            <person name="Lehrach H."/>
            <person name="Meindl A."/>
            <person name="Minx P.J."/>
            <person name="Hillier L.W."/>
            <person name="Willard H.F."/>
            <person name="Wilson R.K."/>
            <person name="Waterston R.H."/>
            <person name="Rice C.M."/>
            <person name="Vaudin M."/>
            <person name="Coulson A."/>
            <person name="Nelson D.L."/>
            <person name="Weinstock G."/>
            <person name="Sulston J.E."/>
            <person name="Durbin R.M."/>
            <person name="Hubbard T."/>
            <person name="Gibbs R.A."/>
            <person name="Beck S."/>
            <person name="Rogers J."/>
            <person name="Bentley D.R."/>
        </authorList>
    </citation>
    <scope>NUCLEOTIDE SEQUENCE [LARGE SCALE GENOMIC DNA]</scope>
</reference>
<reference key="4">
    <citation type="submission" date="2005-07" db="EMBL/GenBank/DDBJ databases">
        <authorList>
            <person name="Mural R.J."/>
            <person name="Istrail S."/>
            <person name="Sutton G.G."/>
            <person name="Florea L."/>
            <person name="Halpern A.L."/>
            <person name="Mobarry C.M."/>
            <person name="Lippert R."/>
            <person name="Walenz B."/>
            <person name="Shatkay H."/>
            <person name="Dew I."/>
            <person name="Miller J.R."/>
            <person name="Flanigan M.J."/>
            <person name="Edwards N.J."/>
            <person name="Bolanos R."/>
            <person name="Fasulo D."/>
            <person name="Halldorsson B.V."/>
            <person name="Hannenhalli S."/>
            <person name="Turner R."/>
            <person name="Yooseph S."/>
            <person name="Lu F."/>
            <person name="Nusskern D.R."/>
            <person name="Shue B.C."/>
            <person name="Zheng X.H."/>
            <person name="Zhong F."/>
            <person name="Delcher A.L."/>
            <person name="Huson D.H."/>
            <person name="Kravitz S.A."/>
            <person name="Mouchard L."/>
            <person name="Reinert K."/>
            <person name="Remington K.A."/>
            <person name="Clark A.G."/>
            <person name="Waterman M.S."/>
            <person name="Eichler E.E."/>
            <person name="Adams M.D."/>
            <person name="Hunkapiller M.W."/>
            <person name="Myers E.W."/>
            <person name="Venter J.C."/>
        </authorList>
    </citation>
    <scope>NUCLEOTIDE SEQUENCE [LARGE SCALE GENOMIC DNA]</scope>
</reference>
<reference key="5">
    <citation type="journal article" date="2004" name="Genome Res.">
        <title>The status, quality, and expansion of the NIH full-length cDNA project: the Mammalian Gene Collection (MGC).</title>
        <authorList>
            <consortium name="The MGC Project Team"/>
        </authorList>
    </citation>
    <scope>NUCLEOTIDE SEQUENCE [LARGE SCALE MRNA] (ISOFORMS 1 AND 2)</scope>
    <source>
        <tissue>Brain</tissue>
        <tissue>Colon</tissue>
        <tissue>Lymph</tissue>
        <tissue>Placenta</tissue>
        <tissue>Skin</tissue>
    </source>
</reference>
<reference key="6">
    <citation type="journal article" date="2016" name="Cell Rep.">
        <title>APEX Fingerprinting Reveals the Subcellular Localization of Proteins of Interest.</title>
        <authorList>
            <person name="Lee S.Y."/>
            <person name="Kang M.G."/>
            <person name="Park J.S."/>
            <person name="Lee G."/>
            <person name="Ting A.Y."/>
            <person name="Rhee H.W."/>
        </authorList>
    </citation>
    <scope>SUBCELLULAR LOCATION (ISOFORM 1)</scope>
</reference>
<reference key="7">
    <citation type="journal article" date="2020" name="RNA Biol.">
        <title>TRMT2B is responsible for both tRNA and rRNA m5U-methylation in human mitochondria.</title>
        <authorList>
            <person name="Powell C.A."/>
            <person name="Minczuk M."/>
        </authorList>
    </citation>
    <scope>FUNCTION</scope>
    <scope>CATALYTIC ACTIVITY</scope>
    <scope>SUBCELLULAR LOCATION</scope>
</reference>
<reference key="8">
    <citation type="journal article" date="2021" name="Nat. Chem. Biol.">
        <title>Activity-based RNA-modifying enzyme probing reveals DUS3L-mediated dihydrouridylation.</title>
        <authorList>
            <person name="Dai W."/>
            <person name="Li A."/>
            <person name="Yu N.J."/>
            <person name="Nguyen T."/>
            <person name="Leach R.W."/>
            <person name="Wuehr M."/>
            <person name="Kleiner R.E."/>
        </authorList>
    </citation>
    <scope>FUNCTION</scope>
</reference>
<sequence length="504" mass="56476">MAGLKRRVPLHSLRYFISMVGLFSKPGLLPWYARNPPGWSQLFLGTVCKGDFTRVIATKCQKGQKSQKKPSHLGPLDGSWQERLADVVTPLWRLSYEEQLKVKFAAQKKILQRLESYIQMLNGVSVTTAVPKSERLSCLLHPIIPSPVINGYRNKSTFSVNRGPDGNPKTVGFYLGTWRDGNVVCVQSNHLKNIPEKHSQVAQYYEVFLRQSPLEPCLVFHEGGYWRELTVRTNSQGHTMAIITFHPQKLSQEELHVQKEIVKEFFIRGPGAACGLTSLYFQESTMTRCSHQQSPYQLLFGEPYIFEELLSLKIRISPDAFFQINTAGAEMLYRTVGELTGVNSDTILLDICCGTGVIGLSLAQHTSRVLGIELLEQAVEDARWTAAFNGITNSEFHTGQAEKILPGLLKSKEDGQSIVAVVNPARAGLHYKVIQAIRNFRAIHTLVFVSCKLHGESTRNVIELCCPPDPAKKLLGEPFVLQQAVPVDLFPHTPHCELVLLFTR</sequence>
<dbReference type="EC" id="2.1.1.35" evidence="5"/>
<dbReference type="EC" id="2.1.1.-" evidence="5"/>
<dbReference type="EMBL" id="AK022749">
    <property type="protein sequence ID" value="BAB14223.1"/>
    <property type="molecule type" value="mRNA"/>
</dbReference>
<dbReference type="EMBL" id="AL832849">
    <property type="protein sequence ID" value="CAI46112.1"/>
    <property type="molecule type" value="mRNA"/>
</dbReference>
<dbReference type="EMBL" id="AL109952">
    <property type="status" value="NOT_ANNOTATED_CDS"/>
    <property type="molecule type" value="Genomic_DNA"/>
</dbReference>
<dbReference type="EMBL" id="AL133275">
    <property type="status" value="NOT_ANNOTATED_CDS"/>
    <property type="molecule type" value="Genomic_DNA"/>
</dbReference>
<dbReference type="EMBL" id="Z97985">
    <property type="status" value="NOT_ANNOTATED_CDS"/>
    <property type="molecule type" value="Genomic_DNA"/>
</dbReference>
<dbReference type="EMBL" id="CH471115">
    <property type="protein sequence ID" value="EAX02831.1"/>
    <property type="molecule type" value="Genomic_DNA"/>
</dbReference>
<dbReference type="EMBL" id="CH471115">
    <property type="protein sequence ID" value="EAX02837.1"/>
    <property type="molecule type" value="Genomic_DNA"/>
</dbReference>
<dbReference type="EMBL" id="BC007526">
    <property type="protein sequence ID" value="AAH07526.1"/>
    <property type="molecule type" value="mRNA"/>
</dbReference>
<dbReference type="EMBL" id="BC008067">
    <property type="protein sequence ID" value="AAH08067.2"/>
    <property type="molecule type" value="mRNA"/>
</dbReference>
<dbReference type="EMBL" id="BC009437">
    <property type="protein sequence ID" value="AAH09437.1"/>
    <property type="molecule type" value="mRNA"/>
</dbReference>
<dbReference type="EMBL" id="BC020116">
    <property type="protein sequence ID" value="AAH20116.1"/>
    <property type="molecule type" value="mRNA"/>
</dbReference>
<dbReference type="EMBL" id="BC034272">
    <property type="protein sequence ID" value="AAH34272.1"/>
    <property type="molecule type" value="mRNA"/>
</dbReference>
<dbReference type="CCDS" id="CCDS14477.1">
    <molecule id="Q96GJ1-1"/>
</dbReference>
<dbReference type="CCDS" id="CCDS55464.1">
    <molecule id="Q96GJ1-3"/>
</dbReference>
<dbReference type="RefSeq" id="NP_001161442.1">
    <molecule id="Q96GJ1-1"/>
    <property type="nucleotide sequence ID" value="NM_001167970.2"/>
</dbReference>
<dbReference type="RefSeq" id="NP_001161443.1">
    <molecule id="Q96GJ1-3"/>
    <property type="nucleotide sequence ID" value="NM_001167971.2"/>
</dbReference>
<dbReference type="RefSeq" id="NP_001161444.1">
    <molecule id="Q96GJ1-1"/>
    <property type="nucleotide sequence ID" value="NM_001167972.2"/>
</dbReference>
<dbReference type="RefSeq" id="NP_079193.2">
    <molecule id="Q96GJ1-1"/>
    <property type="nucleotide sequence ID" value="NM_024917.5"/>
</dbReference>
<dbReference type="RefSeq" id="XP_005262252.1">
    <property type="nucleotide sequence ID" value="XM_005262195.2"/>
</dbReference>
<dbReference type="RefSeq" id="XP_005262253.1">
    <molecule id="Q96GJ1-1"/>
    <property type="nucleotide sequence ID" value="XM_005262196.3"/>
</dbReference>
<dbReference type="RefSeq" id="XP_006724768.1">
    <property type="nucleotide sequence ID" value="XM_006724705.2"/>
</dbReference>
<dbReference type="RefSeq" id="XP_016885351.1">
    <property type="nucleotide sequence ID" value="XM_017029862.1"/>
</dbReference>
<dbReference type="RefSeq" id="XP_047298488.1">
    <molecule id="Q96GJ1-1"/>
    <property type="nucleotide sequence ID" value="XM_047442532.1"/>
</dbReference>
<dbReference type="RefSeq" id="XP_047298489.1">
    <molecule id="Q96GJ1-3"/>
    <property type="nucleotide sequence ID" value="XM_047442533.1"/>
</dbReference>
<dbReference type="RefSeq" id="XP_054183882.1">
    <molecule id="Q96GJ1-1"/>
    <property type="nucleotide sequence ID" value="XM_054327907.1"/>
</dbReference>
<dbReference type="RefSeq" id="XP_054183883.1">
    <molecule id="Q96GJ1-1"/>
    <property type="nucleotide sequence ID" value="XM_054327908.1"/>
</dbReference>
<dbReference type="RefSeq" id="XP_054183884.1">
    <molecule id="Q96GJ1-3"/>
    <property type="nucleotide sequence ID" value="XM_054327909.1"/>
</dbReference>
<dbReference type="SMR" id="Q96GJ1"/>
<dbReference type="BioGRID" id="123044">
    <property type="interactions" value="29"/>
</dbReference>
<dbReference type="FunCoup" id="Q96GJ1">
    <property type="interactions" value="471"/>
</dbReference>
<dbReference type="IntAct" id="Q96GJ1">
    <property type="interactions" value="21"/>
</dbReference>
<dbReference type="STRING" id="9606.ENSP00000362027"/>
<dbReference type="iPTMnet" id="Q96GJ1"/>
<dbReference type="PhosphoSitePlus" id="Q96GJ1"/>
<dbReference type="BioMuta" id="TRMT2B"/>
<dbReference type="DMDM" id="74762656"/>
<dbReference type="jPOST" id="Q96GJ1"/>
<dbReference type="MassIVE" id="Q96GJ1"/>
<dbReference type="PaxDb" id="9606-ENSP00000362027"/>
<dbReference type="PeptideAtlas" id="Q96GJ1"/>
<dbReference type="ProteomicsDB" id="76637">
    <molecule id="Q96GJ1-1"/>
</dbReference>
<dbReference type="ProteomicsDB" id="76638">
    <molecule id="Q96GJ1-2"/>
</dbReference>
<dbReference type="ProteomicsDB" id="76639">
    <molecule id="Q96GJ1-3"/>
</dbReference>
<dbReference type="Pumba" id="Q96GJ1"/>
<dbReference type="Antibodypedia" id="28575">
    <property type="antibodies" value="157 antibodies from 24 providers"/>
</dbReference>
<dbReference type="DNASU" id="79979"/>
<dbReference type="Ensembl" id="ENST00000372935.5">
    <molecule id="Q96GJ1-1"/>
    <property type="protein sequence ID" value="ENSP00000362026.1"/>
    <property type="gene ID" value="ENSG00000188917.15"/>
</dbReference>
<dbReference type="Ensembl" id="ENST00000372936.4">
    <molecule id="Q96GJ1-1"/>
    <property type="protein sequence ID" value="ENSP00000362027.3"/>
    <property type="gene ID" value="ENSG00000188917.15"/>
</dbReference>
<dbReference type="Ensembl" id="ENST00000372939.5">
    <molecule id="Q96GJ1-3"/>
    <property type="protein sequence ID" value="ENSP00000362030.1"/>
    <property type="gene ID" value="ENSG00000188917.15"/>
</dbReference>
<dbReference type="Ensembl" id="ENST00000545398.5">
    <molecule id="Q96GJ1-1"/>
    <property type="protein sequence ID" value="ENSP00000438134.1"/>
    <property type="gene ID" value="ENSG00000188917.15"/>
</dbReference>
<dbReference type="GeneID" id="79979"/>
<dbReference type="KEGG" id="hsa:79979"/>
<dbReference type="MANE-Select" id="ENST00000372936.4">
    <property type="protein sequence ID" value="ENSP00000362027.3"/>
    <property type="RefSeq nucleotide sequence ID" value="NM_024917.6"/>
    <property type="RefSeq protein sequence ID" value="NP_079193.2"/>
</dbReference>
<dbReference type="UCSC" id="uc004egq.4">
    <molecule id="Q96GJ1-1"/>
    <property type="organism name" value="human"/>
</dbReference>
<dbReference type="AGR" id="HGNC:25748"/>
<dbReference type="CTD" id="79979"/>
<dbReference type="DisGeNET" id="79979"/>
<dbReference type="GeneCards" id="TRMT2B"/>
<dbReference type="HGNC" id="HGNC:25748">
    <property type="gene designation" value="TRMT2B"/>
</dbReference>
<dbReference type="HPA" id="ENSG00000188917">
    <property type="expression patterns" value="Low tissue specificity"/>
</dbReference>
<dbReference type="MIM" id="301128">
    <property type="type" value="gene"/>
</dbReference>
<dbReference type="neXtProt" id="NX_Q96GJ1"/>
<dbReference type="OpenTargets" id="ENSG00000188917"/>
<dbReference type="PharmGKB" id="PA164726782"/>
<dbReference type="VEuPathDB" id="HostDB:ENSG00000188917"/>
<dbReference type="eggNOG" id="KOG2187">
    <property type="taxonomic scope" value="Eukaryota"/>
</dbReference>
<dbReference type="GeneTree" id="ENSGT00530000063723"/>
<dbReference type="HOGENOM" id="CLU_014689_4_0_1"/>
<dbReference type="InParanoid" id="Q96GJ1"/>
<dbReference type="OMA" id="HGQPHIY"/>
<dbReference type="OrthoDB" id="10250660at2759"/>
<dbReference type="PAN-GO" id="Q96GJ1">
    <property type="GO annotations" value="0 GO annotations based on evolutionary models"/>
</dbReference>
<dbReference type="PhylomeDB" id="Q96GJ1"/>
<dbReference type="TreeFam" id="TF352239"/>
<dbReference type="PathwayCommons" id="Q96GJ1"/>
<dbReference type="SignaLink" id="Q96GJ1"/>
<dbReference type="BioGRID-ORCS" id="79979">
    <property type="hits" value="13 hits in 774 CRISPR screens"/>
</dbReference>
<dbReference type="ChiTaRS" id="TRMT2B">
    <property type="organism name" value="human"/>
</dbReference>
<dbReference type="GenomeRNAi" id="79979"/>
<dbReference type="Pharos" id="Q96GJ1">
    <property type="development level" value="Tdark"/>
</dbReference>
<dbReference type="PRO" id="PR:Q96GJ1"/>
<dbReference type="Proteomes" id="UP000005640">
    <property type="component" value="Chromosome X"/>
</dbReference>
<dbReference type="RNAct" id="Q96GJ1">
    <property type="molecule type" value="protein"/>
</dbReference>
<dbReference type="Bgee" id="ENSG00000188917">
    <property type="expression patterns" value="Expressed in granulocyte and 143 other cell types or tissues"/>
</dbReference>
<dbReference type="ExpressionAtlas" id="Q96GJ1">
    <property type="expression patterns" value="baseline and differential"/>
</dbReference>
<dbReference type="GO" id="GO:0005759">
    <property type="term" value="C:mitochondrial matrix"/>
    <property type="evidence" value="ECO:0000314"/>
    <property type="project" value="UniProtKB"/>
</dbReference>
<dbReference type="GO" id="GO:0005739">
    <property type="term" value="C:mitochondrion"/>
    <property type="evidence" value="ECO:0000314"/>
    <property type="project" value="UniProtKB"/>
</dbReference>
<dbReference type="GO" id="GO:0070041">
    <property type="term" value="F:rRNA (uridine-C5-)-methyltransferase activity"/>
    <property type="evidence" value="ECO:0000314"/>
    <property type="project" value="UniProtKB"/>
</dbReference>
<dbReference type="GO" id="GO:0030697">
    <property type="term" value="F:tRNA (uracil(54)-C5)-methyltransferase activity, S-adenosyl methionine-dependent"/>
    <property type="evidence" value="ECO:0000314"/>
    <property type="project" value="UniProtKB"/>
</dbReference>
<dbReference type="GO" id="GO:0008033">
    <property type="term" value="P:tRNA processing"/>
    <property type="evidence" value="ECO:0007669"/>
    <property type="project" value="UniProtKB-KW"/>
</dbReference>
<dbReference type="CDD" id="cd02440">
    <property type="entry name" value="AdoMet_MTases"/>
    <property type="match status" value="1"/>
</dbReference>
<dbReference type="Gene3D" id="2.40.50.1070">
    <property type="match status" value="1"/>
</dbReference>
<dbReference type="Gene3D" id="3.40.50.150">
    <property type="entry name" value="Vaccinia Virus protein VP39"/>
    <property type="match status" value="1"/>
</dbReference>
<dbReference type="InterPro" id="IPR029063">
    <property type="entry name" value="SAM-dependent_MTases_sf"/>
</dbReference>
<dbReference type="InterPro" id="IPR045850">
    <property type="entry name" value="TRM2_met"/>
</dbReference>
<dbReference type="InterPro" id="IPR025823">
    <property type="entry name" value="TRM2B_chor"/>
</dbReference>
<dbReference type="InterPro" id="IPR010280">
    <property type="entry name" value="U5_MeTrfase_fam"/>
</dbReference>
<dbReference type="PANTHER" id="PTHR45904">
    <property type="entry name" value="TRNA (URACIL-5-)-METHYLTRANSFERASE"/>
    <property type="match status" value="1"/>
</dbReference>
<dbReference type="PANTHER" id="PTHR45904:SF1">
    <property type="entry name" value="TRNA (URACIL-5-)-METHYLTRANSFERASE HOMOLOG B"/>
    <property type="match status" value="1"/>
</dbReference>
<dbReference type="Pfam" id="PF05958">
    <property type="entry name" value="tRNA_U5-meth_tr"/>
    <property type="match status" value="1"/>
</dbReference>
<dbReference type="SUPFAM" id="SSF53335">
    <property type="entry name" value="S-adenosyl-L-methionine-dependent methyltransferases"/>
    <property type="match status" value="1"/>
</dbReference>
<dbReference type="PROSITE" id="PS51687">
    <property type="entry name" value="SAM_MT_RNA_M5U"/>
    <property type="match status" value="1"/>
</dbReference>
<dbReference type="PROSITE" id="PS51621">
    <property type="entry name" value="SAM_MT_RNA_M5U_1"/>
    <property type="match status" value="1"/>
</dbReference>
<organism>
    <name type="scientific">Homo sapiens</name>
    <name type="common">Human</name>
    <dbReference type="NCBI Taxonomy" id="9606"/>
    <lineage>
        <taxon>Eukaryota</taxon>
        <taxon>Metazoa</taxon>
        <taxon>Chordata</taxon>
        <taxon>Craniata</taxon>
        <taxon>Vertebrata</taxon>
        <taxon>Euteleostomi</taxon>
        <taxon>Mammalia</taxon>
        <taxon>Eutheria</taxon>
        <taxon>Euarchontoglires</taxon>
        <taxon>Primates</taxon>
        <taxon>Haplorrhini</taxon>
        <taxon>Catarrhini</taxon>
        <taxon>Hominidae</taxon>
        <taxon>Homo</taxon>
    </lineage>
</organism>
<protein>
    <recommendedName>
        <fullName evidence="10">tRNA (uracil-5-)-methyltransferase homolog B</fullName>
        <ecNumber evidence="5">2.1.1.35</ecNumber>
    </recommendedName>
    <alternativeName>
        <fullName evidence="10">TRM2 homolog B</fullName>
    </alternativeName>
    <alternativeName>
        <fullName evidence="10">rRNA (uracil-5-)-methyltransferase TRMT2B</fullName>
        <ecNumber evidence="5">2.1.1.-</ecNumber>
    </alternativeName>
</protein>
<keyword id="KW-0025">Alternative splicing</keyword>
<keyword id="KW-0489">Methyltransferase</keyword>
<keyword id="KW-0496">Mitochondrion</keyword>
<keyword id="KW-1267">Proteomics identification</keyword>
<keyword id="KW-1185">Reference proteome</keyword>
<keyword id="KW-0698">rRNA processing</keyword>
<keyword id="KW-0949">S-adenosyl-L-methionine</keyword>
<keyword id="KW-0808">Transferase</keyword>
<keyword id="KW-0809">Transit peptide</keyword>
<keyword id="KW-0819">tRNA processing</keyword>
<feature type="transit peptide" description="Mitochondrion" evidence="2">
    <location>
        <begin position="1"/>
        <end position="16"/>
    </location>
</feature>
<feature type="chain" id="PRO_0000311932" description="tRNA (uracil-5-)-methyltransferase homolog B">
    <location>
        <begin position="17"/>
        <end position="504"/>
    </location>
</feature>
<feature type="active site" description="Nucleophile" evidence="3">
    <location>
        <position position="451"/>
    </location>
</feature>
<feature type="active site" description="Proton acceptor" evidence="1">
    <location>
        <position position="497"/>
    </location>
</feature>
<feature type="binding site" evidence="3">
    <location>
        <position position="323"/>
    </location>
    <ligand>
        <name>S-adenosyl-L-methionine</name>
        <dbReference type="ChEBI" id="CHEBI:59789"/>
    </ligand>
</feature>
<feature type="binding site" evidence="3">
    <location>
        <position position="373"/>
    </location>
    <ligand>
        <name>S-adenosyl-L-methionine</name>
        <dbReference type="ChEBI" id="CHEBI:59789"/>
    </ligand>
</feature>
<feature type="binding site" evidence="3">
    <location>
        <position position="423"/>
    </location>
    <ligand>
        <name>S-adenosyl-L-methionine</name>
        <dbReference type="ChEBI" id="CHEBI:59789"/>
    </ligand>
</feature>
<feature type="splice variant" id="VSP_029643" description="In isoform 3." evidence="8">
    <location>
        <begin position="102"/>
        <end position="146"/>
    </location>
</feature>
<feature type="splice variant" id="VSP_029644" description="In isoform 2." evidence="7">
    <original>LCCPPDPAKKLLGEPFVLQQAVPVDLFPHTPHCELVLLFTR</original>
    <variation>RSLILLECSGMVSAHCSLHLPGSSDSPASAS</variation>
    <location>
        <begin position="464"/>
        <end position="504"/>
    </location>
</feature>
<feature type="sequence variant" id="VAR_037355" description="In dbSNP:rs7064613.">
    <original>S</original>
    <variation>R</variation>
    <location>
        <position position="12"/>
    </location>
</feature>
<feature type="sequence conflict" description="In Ref. 1; BAB14223." evidence="10" ref="1">
    <original>H</original>
    <variation>R</variation>
    <location>
        <position position="238"/>
    </location>
</feature>
<feature type="sequence conflict" description="In Ref. 2; CAI46112." evidence="10" ref="2">
    <original>C</original>
    <variation>R</variation>
    <location>
        <position position="451"/>
    </location>
</feature>
<evidence type="ECO:0000250" key="1">
    <source>
        <dbReference type="UniProtKB" id="P23003"/>
    </source>
</evidence>
<evidence type="ECO:0000255" key="2"/>
<evidence type="ECO:0000255" key="3">
    <source>
        <dbReference type="PROSITE-ProRule" id="PRU01024"/>
    </source>
</evidence>
<evidence type="ECO:0000269" key="4">
    <source>
    </source>
</evidence>
<evidence type="ECO:0000269" key="5">
    <source>
    </source>
</evidence>
<evidence type="ECO:0000269" key="6">
    <source>
    </source>
</evidence>
<evidence type="ECO:0000303" key="7">
    <source>
    </source>
</evidence>
<evidence type="ECO:0000303" key="8">
    <source>
    </source>
</evidence>
<evidence type="ECO:0000303" key="9">
    <source>
    </source>
</evidence>
<evidence type="ECO:0000305" key="10"/>
<evidence type="ECO:0000312" key="11">
    <source>
        <dbReference type="HGNC" id="HGNC:25748"/>
    </source>
</evidence>
<proteinExistence type="evidence at protein level"/>